<evidence type="ECO:0000305" key="1"/>
<comment type="similarity">
    <text evidence="1">Belongs to the coronaviruses ns4.9 protein family.</text>
</comment>
<protein>
    <recommendedName>
        <fullName>Truncated non-structural protein of 4.9 kDa</fullName>
        <shortName>Truncated ns4.9</shortName>
    </recommendedName>
    <alternativeName>
        <fullName>Truncated 4.9 kDa accessory protein</fullName>
    </alternativeName>
</protein>
<name>NS49_CVBLS</name>
<gene>
    <name type="ORF">4a</name>
</gene>
<organismHost>
    <name type="scientific">Bos taurus</name>
    <name type="common">Bovine</name>
    <dbReference type="NCBI Taxonomy" id="9913"/>
</organismHost>
<dbReference type="EMBL" id="AF058943">
    <property type="protein sequence ID" value="AAF25510.1"/>
    <property type="molecule type" value="Genomic_RNA"/>
</dbReference>
<dbReference type="InterPro" id="IPR009314">
    <property type="entry name" value="Corona_NS1"/>
</dbReference>
<dbReference type="Pfam" id="PF06145">
    <property type="entry name" value="Corona_NS1"/>
    <property type="match status" value="1"/>
</dbReference>
<proteinExistence type="inferred from homology"/>
<reference key="1">
    <citation type="journal article" date="1998" name="Virus Genes">
        <title>Nucleotide and predicted amino acid sequences of all genes encoded by the 3' genomic portion (9.5 kb) of respiratory bovine coronaviruses and comparisons among respiratory and enteric coronaviruses.</title>
        <authorList>
            <person name="Chouljenko V.N."/>
            <person name="Kousoulas K.G."/>
            <person name="Lin X.Q."/>
            <person name="Storz J."/>
        </authorList>
    </citation>
    <scope>NUCLEOTIDE SEQUENCE [GENOMIC RNA]</scope>
    <source>
        <strain>Isolate LSU-94LSS-051-2</strain>
    </source>
</reference>
<feature type="chain" id="PRO_0000283940" description="Truncated non-structural protein of 4.9 kDa">
    <location>
        <begin position="1"/>
        <end position="29"/>
    </location>
</feature>
<accession>Q9QAR4</accession>
<sequence>MTTKFVFDLLAPDDILHPSNHVNLIIRPI</sequence>
<organism>
    <name type="scientific">Bovine coronavirus (strain LSU-94LSS-051)</name>
    <name type="common">BCoV-LSU</name>
    <name type="synonym">BCV</name>
    <dbReference type="NCBI Taxonomy" id="233261"/>
    <lineage>
        <taxon>Viruses</taxon>
        <taxon>Riboviria</taxon>
        <taxon>Orthornavirae</taxon>
        <taxon>Pisuviricota</taxon>
        <taxon>Pisoniviricetes</taxon>
        <taxon>Nidovirales</taxon>
        <taxon>Cornidovirineae</taxon>
        <taxon>Coronaviridae</taxon>
        <taxon>Orthocoronavirinae</taxon>
        <taxon>Betacoronavirus</taxon>
        <taxon>Embecovirus</taxon>
        <taxon>Betacoronavirus 1</taxon>
    </lineage>
</organism>